<protein>
    <recommendedName>
        <fullName>Conserved oligomeric Golgi complex subunit 7</fullName>
        <shortName>COG complex subunit 7</shortName>
    </recommendedName>
    <alternativeName>
        <fullName>Complexed with DOR1 protein 5</fullName>
    </alternativeName>
    <alternativeName>
        <fullName>Component of oligomeric Golgi complex 7</fullName>
    </alternativeName>
</protein>
<proteinExistence type="evidence at protein level"/>
<comment type="function">
    <text>Acts as a component of the peripheral membrane COG complex that is involved in intra-Golgi protein trafficking. COG is located at the cis-Golgi, and regulates tethering of retrograde intra-Golgi vesicles and possibly a number of other membrane trafficking events.</text>
</comment>
<comment type="subunit">
    <text evidence="2">Component of the conserved oligomeric Golgi (COG or Sec34/Sec35) complex which consists of eight different proteins COG1-COG8.</text>
</comment>
<comment type="interaction">
    <interactant intactId="EBI-4847">
        <id>P53195</id>
    </interactant>
    <interactant intactId="EBI-16614">
        <id>P53271</id>
        <label>COG2</label>
    </interactant>
    <organismsDiffer>false</organismsDiffer>
    <experiments>2</experiments>
</comment>
<comment type="interaction">
    <interactant intactId="EBI-4847">
        <id>P53195</id>
    </interactant>
    <interactant intactId="EBI-16605">
        <id>P40094</id>
        <label>COG3</label>
    </interactant>
    <organismsDiffer>false</organismsDiffer>
    <experiments>3</experiments>
</comment>
<comment type="interaction">
    <interactant intactId="EBI-4847">
        <id>P53195</id>
    </interactant>
    <interactant intactId="EBI-4823">
        <id>Q06096</id>
        <label>COG4</label>
    </interactant>
    <organismsDiffer>false</organismsDiffer>
    <experiments>3</experiments>
</comment>
<comment type="interaction">
    <interactant intactId="EBI-4847">
        <id>P53195</id>
    </interactant>
    <interactant intactId="EBI-4841">
        <id>P53951</id>
        <label>COG5</label>
    </interactant>
    <organismsDiffer>false</organismsDiffer>
    <experiments>7</experiments>
</comment>
<comment type="interaction">
    <interactant intactId="EBI-4847">
        <id>P53195</id>
    </interactant>
    <interactant intactId="EBI-4829">
        <id>P53959</id>
        <label>COG6</label>
    </interactant>
    <organismsDiffer>false</organismsDiffer>
    <experiments>4</experiments>
</comment>
<comment type="interaction">
    <interactant intactId="EBI-4847">
        <id>P53195</id>
    </interactant>
    <interactant intactId="EBI-6035">
        <id>Q04632</id>
        <label>COG8</label>
    </interactant>
    <organismsDiffer>false</organismsDiffer>
    <experiments>3</experiments>
</comment>
<comment type="subcellular location">
    <subcellularLocation>
        <location evidence="1">Golgi apparatus membrane</location>
        <topology evidence="1">Peripheral membrane protein</topology>
    </subcellularLocation>
</comment>
<comment type="miscellaneous">
    <text evidence="3">Present with 1360 molecules/cell in log phase SD medium.</text>
</comment>
<dbReference type="EMBL" id="Z72527">
    <property type="protein sequence ID" value="CAA96705.1"/>
    <property type="molecule type" value="Genomic_DNA"/>
</dbReference>
<dbReference type="EMBL" id="AY693131">
    <property type="protein sequence ID" value="AAT93150.1"/>
    <property type="molecule type" value="Genomic_DNA"/>
</dbReference>
<dbReference type="EMBL" id="BK006941">
    <property type="protein sequence ID" value="DAA08094.1"/>
    <property type="molecule type" value="Genomic_DNA"/>
</dbReference>
<dbReference type="PIR" id="S64007">
    <property type="entry name" value="S64007"/>
</dbReference>
<dbReference type="RefSeq" id="NP_011510.1">
    <property type="nucleotide sequence ID" value="NM_001180870.1"/>
</dbReference>
<dbReference type="SMR" id="P53195"/>
<dbReference type="BioGRID" id="33240">
    <property type="interactions" value="370"/>
</dbReference>
<dbReference type="ComplexPortal" id="CPX-1840">
    <property type="entry name" value="COG Golgi transport complex"/>
</dbReference>
<dbReference type="DIP" id="DIP-4580N"/>
<dbReference type="FunCoup" id="P53195">
    <property type="interactions" value="61"/>
</dbReference>
<dbReference type="IntAct" id="P53195">
    <property type="interactions" value="8"/>
</dbReference>
<dbReference type="MINT" id="P53195"/>
<dbReference type="STRING" id="4932.YGL005C"/>
<dbReference type="iPTMnet" id="P53195"/>
<dbReference type="PaxDb" id="4932-YGL005C"/>
<dbReference type="PeptideAtlas" id="P53195"/>
<dbReference type="EnsemblFungi" id="YGL005C_mRNA">
    <property type="protein sequence ID" value="YGL005C"/>
    <property type="gene ID" value="YGL005C"/>
</dbReference>
<dbReference type="GeneID" id="852879"/>
<dbReference type="KEGG" id="sce:YGL005C"/>
<dbReference type="AGR" id="SGD:S000002973"/>
<dbReference type="SGD" id="S000002973">
    <property type="gene designation" value="COG7"/>
</dbReference>
<dbReference type="VEuPathDB" id="FungiDB:YGL005C"/>
<dbReference type="eggNOG" id="ENOG502RXQM">
    <property type="taxonomic scope" value="Eukaryota"/>
</dbReference>
<dbReference type="HOGENOM" id="CLU_086134_0_0_1"/>
<dbReference type="InParanoid" id="P53195"/>
<dbReference type="OMA" id="EFVPHAY"/>
<dbReference type="OrthoDB" id="4064682at2759"/>
<dbReference type="BioCyc" id="YEAST:G3O-30529-MONOMER"/>
<dbReference type="BioGRID-ORCS" id="852879">
    <property type="hits" value="0 hits in 10 CRISPR screens"/>
</dbReference>
<dbReference type="PRO" id="PR:P53195"/>
<dbReference type="Proteomes" id="UP000002311">
    <property type="component" value="Chromosome VII"/>
</dbReference>
<dbReference type="RNAct" id="P53195">
    <property type="molecule type" value="protein"/>
</dbReference>
<dbReference type="GO" id="GO:0005829">
    <property type="term" value="C:cytosol"/>
    <property type="evidence" value="ECO:0007005"/>
    <property type="project" value="SGD"/>
</dbReference>
<dbReference type="GO" id="GO:0000139">
    <property type="term" value="C:Golgi membrane"/>
    <property type="evidence" value="ECO:0000303"/>
    <property type="project" value="ComplexPortal"/>
</dbReference>
<dbReference type="GO" id="GO:0017119">
    <property type="term" value="C:Golgi transport complex"/>
    <property type="evidence" value="ECO:0000315"/>
    <property type="project" value="SGD"/>
</dbReference>
<dbReference type="GO" id="GO:0005739">
    <property type="term" value="C:mitochondrion"/>
    <property type="evidence" value="ECO:0007005"/>
    <property type="project" value="SGD"/>
</dbReference>
<dbReference type="GO" id="GO:0032258">
    <property type="term" value="P:cytoplasm to vacuole targeting by the Cvt pathway"/>
    <property type="evidence" value="ECO:0000315"/>
    <property type="project" value="SGD"/>
</dbReference>
<dbReference type="GO" id="GO:0006891">
    <property type="term" value="P:intra-Golgi vesicle-mediated transport"/>
    <property type="evidence" value="ECO:0000315"/>
    <property type="project" value="SGD"/>
</dbReference>
<dbReference type="GO" id="GO:0000301">
    <property type="term" value="P:retrograde transport, vesicle recycling within Golgi"/>
    <property type="evidence" value="ECO:0000303"/>
    <property type="project" value="ComplexPortal"/>
</dbReference>
<dbReference type="Gene3D" id="6.10.250.2790">
    <property type="match status" value="1"/>
</dbReference>
<name>COG7_YEAST</name>
<gene>
    <name type="primary">COG7</name>
    <name type="synonym">COD5</name>
    <name type="ordered locus">YGL005C</name>
</gene>
<reference key="1">
    <citation type="journal article" date="1997" name="Nature">
        <title>The nucleotide sequence of Saccharomyces cerevisiae chromosome VII.</title>
        <authorList>
            <person name="Tettelin H."/>
            <person name="Agostoni-Carbone M.L."/>
            <person name="Albermann K."/>
            <person name="Albers M."/>
            <person name="Arroyo J."/>
            <person name="Backes U."/>
            <person name="Barreiros T."/>
            <person name="Bertani I."/>
            <person name="Bjourson A.J."/>
            <person name="Brueckner M."/>
            <person name="Bruschi C.V."/>
            <person name="Carignani G."/>
            <person name="Castagnoli L."/>
            <person name="Cerdan E."/>
            <person name="Clemente M.L."/>
            <person name="Coblenz A."/>
            <person name="Coglievina M."/>
            <person name="Coissac E."/>
            <person name="Defoor E."/>
            <person name="Del Bino S."/>
            <person name="Delius H."/>
            <person name="Delneri D."/>
            <person name="de Wergifosse P."/>
            <person name="Dujon B."/>
            <person name="Durand P."/>
            <person name="Entian K.-D."/>
            <person name="Eraso P."/>
            <person name="Escribano V."/>
            <person name="Fabiani L."/>
            <person name="Fartmann B."/>
            <person name="Feroli F."/>
            <person name="Feuermann M."/>
            <person name="Frontali L."/>
            <person name="Garcia-Gonzalez M."/>
            <person name="Garcia-Saez M.I."/>
            <person name="Goffeau A."/>
            <person name="Guerreiro P."/>
            <person name="Hani J."/>
            <person name="Hansen M."/>
            <person name="Hebling U."/>
            <person name="Hernandez K."/>
            <person name="Heumann K."/>
            <person name="Hilger F."/>
            <person name="Hofmann B."/>
            <person name="Indge K.J."/>
            <person name="James C.M."/>
            <person name="Klima R."/>
            <person name="Koetter P."/>
            <person name="Kramer B."/>
            <person name="Kramer W."/>
            <person name="Lauquin G."/>
            <person name="Leuther H."/>
            <person name="Louis E.J."/>
            <person name="Maillier E."/>
            <person name="Marconi A."/>
            <person name="Martegani E."/>
            <person name="Mazon M.J."/>
            <person name="Mazzoni C."/>
            <person name="McReynolds A.D.K."/>
            <person name="Melchioretto P."/>
            <person name="Mewes H.-W."/>
            <person name="Minenkova O."/>
            <person name="Mueller-Auer S."/>
            <person name="Nawrocki A."/>
            <person name="Netter P."/>
            <person name="Neu R."/>
            <person name="Nombela C."/>
            <person name="Oliver S.G."/>
            <person name="Panzeri L."/>
            <person name="Paoluzi S."/>
            <person name="Plevani P."/>
            <person name="Portetelle D."/>
            <person name="Portillo F."/>
            <person name="Potier S."/>
            <person name="Purnelle B."/>
            <person name="Rieger M."/>
            <person name="Riles L."/>
            <person name="Rinaldi T."/>
            <person name="Robben J."/>
            <person name="Rodrigues-Pousada C."/>
            <person name="Rodriguez-Belmonte E."/>
            <person name="Rodriguez-Torres A.M."/>
            <person name="Rose M."/>
            <person name="Ruzzi M."/>
            <person name="Saliola M."/>
            <person name="Sanchez-Perez M."/>
            <person name="Schaefer B."/>
            <person name="Schaefer M."/>
            <person name="Scharfe M."/>
            <person name="Schmidheini T."/>
            <person name="Schreer A."/>
            <person name="Skala J."/>
            <person name="Souciet J.-L."/>
            <person name="Steensma H.Y."/>
            <person name="Talla E."/>
            <person name="Thierry A."/>
            <person name="Vandenbol M."/>
            <person name="van der Aart Q.J.M."/>
            <person name="Van Dyck L."/>
            <person name="Vanoni M."/>
            <person name="Verhasselt P."/>
            <person name="Voet M."/>
            <person name="Volckaert G."/>
            <person name="Wambutt R."/>
            <person name="Watson M.D."/>
            <person name="Weber N."/>
            <person name="Wedler E."/>
            <person name="Wedler H."/>
            <person name="Wipfli P."/>
            <person name="Wolf K."/>
            <person name="Wright L.F."/>
            <person name="Zaccaria P."/>
            <person name="Zimmermann M."/>
            <person name="Zollner A."/>
            <person name="Kleine K."/>
        </authorList>
    </citation>
    <scope>NUCLEOTIDE SEQUENCE [LARGE SCALE GENOMIC DNA]</scope>
    <source>
        <strain>ATCC 204508 / S288c</strain>
    </source>
</reference>
<reference key="2">
    <citation type="journal article" date="2014" name="G3 (Bethesda)">
        <title>The reference genome sequence of Saccharomyces cerevisiae: Then and now.</title>
        <authorList>
            <person name="Engel S.R."/>
            <person name="Dietrich F.S."/>
            <person name="Fisk D.G."/>
            <person name="Binkley G."/>
            <person name="Balakrishnan R."/>
            <person name="Costanzo M.C."/>
            <person name="Dwight S.S."/>
            <person name="Hitz B.C."/>
            <person name="Karra K."/>
            <person name="Nash R.S."/>
            <person name="Weng S."/>
            <person name="Wong E.D."/>
            <person name="Lloyd P."/>
            <person name="Skrzypek M.S."/>
            <person name="Miyasato S.R."/>
            <person name="Simison M."/>
            <person name="Cherry J.M."/>
        </authorList>
    </citation>
    <scope>GENOME REANNOTATION</scope>
    <source>
        <strain>ATCC 204508 / S288c</strain>
    </source>
</reference>
<reference key="3">
    <citation type="journal article" date="2007" name="Genome Res.">
        <title>Approaching a complete repository of sequence-verified protein-encoding clones for Saccharomyces cerevisiae.</title>
        <authorList>
            <person name="Hu Y."/>
            <person name="Rolfs A."/>
            <person name="Bhullar B."/>
            <person name="Murthy T.V.S."/>
            <person name="Zhu C."/>
            <person name="Berger M.F."/>
            <person name="Camargo A.A."/>
            <person name="Kelley F."/>
            <person name="McCarron S."/>
            <person name="Jepson D."/>
            <person name="Richardson A."/>
            <person name="Raphael J."/>
            <person name="Moreira D."/>
            <person name="Taycher E."/>
            <person name="Zuo D."/>
            <person name="Mohr S."/>
            <person name="Kane M.F."/>
            <person name="Williamson J."/>
            <person name="Simpson A.J.G."/>
            <person name="Bulyk M.L."/>
            <person name="Harlow E."/>
            <person name="Marsischky G."/>
            <person name="Kolodner R.D."/>
            <person name="LaBaer J."/>
        </authorList>
    </citation>
    <scope>NUCLEOTIDE SEQUENCE [GENOMIC DNA]</scope>
    <source>
        <strain>ATCC 204508 / S288c</strain>
    </source>
</reference>
<reference key="4">
    <citation type="journal article" date="2001" name="Dev. Cell">
        <title>The Sec34/35 Golgi transport complex is related to the exocyst, defining a family of complexes involved in multiple steps of membrane traffic.</title>
        <authorList>
            <person name="Whyte J.R."/>
            <person name="Munro S."/>
        </authorList>
    </citation>
    <scope>SUBUNIT</scope>
</reference>
<reference key="5">
    <citation type="journal article" date="2003" name="Nature">
        <title>Global analysis of protein expression in yeast.</title>
        <authorList>
            <person name="Ghaemmaghami S."/>
            <person name="Huh W.-K."/>
            <person name="Bower K."/>
            <person name="Howson R.W."/>
            <person name="Belle A."/>
            <person name="Dephoure N."/>
            <person name="O'Shea E.K."/>
            <person name="Weissman J.S."/>
        </authorList>
    </citation>
    <scope>LEVEL OF PROTEIN EXPRESSION [LARGE SCALE ANALYSIS]</scope>
</reference>
<reference key="6">
    <citation type="journal article" date="2004" name="J. Biol. Chem.">
        <title>The binary interacting network of the conserved oligomeric Golgi tethering complex.</title>
        <authorList>
            <person name="Loh E."/>
            <person name="Hong W."/>
        </authorList>
    </citation>
    <scope>COMPOSITION OF THE COG COMPLEX</scope>
    <scope>INTERACTION WITH COG4</scope>
</reference>
<keyword id="KW-0333">Golgi apparatus</keyword>
<keyword id="KW-0472">Membrane</keyword>
<keyword id="KW-0653">Protein transport</keyword>
<keyword id="KW-1185">Reference proteome</keyword>
<keyword id="KW-0813">Transport</keyword>
<evidence type="ECO:0000250" key="1"/>
<evidence type="ECO:0000269" key="2">
    <source>
    </source>
</evidence>
<evidence type="ECO:0000269" key="3">
    <source>
    </source>
</evidence>
<evidence type="ECO:0000305" key="4"/>
<accession>P53195</accession>
<accession>D6VUD3</accession>
<accession>E9P921</accession>
<organism>
    <name type="scientific">Saccharomyces cerevisiae (strain ATCC 204508 / S288c)</name>
    <name type="common">Baker's yeast</name>
    <dbReference type="NCBI Taxonomy" id="559292"/>
    <lineage>
        <taxon>Eukaryota</taxon>
        <taxon>Fungi</taxon>
        <taxon>Dikarya</taxon>
        <taxon>Ascomycota</taxon>
        <taxon>Saccharomycotina</taxon>
        <taxon>Saccharomycetes</taxon>
        <taxon>Saccharomycetales</taxon>
        <taxon>Saccharomycetaceae</taxon>
        <taxon>Saccharomyces</taxon>
    </lineage>
</organism>
<sequence length="279" mass="31775">MVELTITGDDDDILSMFFDEEFVPHAFVDILLSNALNEDQIQTQSVSSLLLTRLDFYTKNLTKELESTIWNLDKLSQTLPRTWASSRYHKEAEQNDSSLYSTESLKSSKLEYYLDTLASAVRALETGMHNVTEKLSDLDNENNRNTNVRQQLQSLMLIKERIEKVVYYLEQVRTVTNISTVRENNTTSTGTDLSITDFRTSLKALEDTIDESLSSAIDNEAKDETNKDLIGRIDSLSELKCLFKGLDKFFAEYSNFSESIKSKAQSYLSTKNIDDGMIS</sequence>
<feature type="chain" id="PRO_0000213520" description="Conserved oligomeric Golgi complex subunit 7">
    <location>
        <begin position="1"/>
        <end position="279"/>
    </location>
</feature>
<feature type="sequence conflict" description="In Ref. 3; AAT93150." evidence="4" ref="3">
    <original>D</original>
    <variation>G</variation>
    <location>
        <position position="12"/>
    </location>
</feature>